<proteinExistence type="inferred from homology"/>
<dbReference type="EMBL" id="BA000039">
    <property type="protein sequence ID" value="BAC07644.1"/>
    <property type="molecule type" value="Genomic_DNA"/>
</dbReference>
<dbReference type="RefSeq" id="NP_680882.1">
    <property type="nucleotide sequence ID" value="NC_004113.1"/>
</dbReference>
<dbReference type="RefSeq" id="WP_011055946.1">
    <property type="nucleotide sequence ID" value="NC_004113.1"/>
</dbReference>
<dbReference type="SMR" id="Q8DMM2"/>
<dbReference type="STRING" id="197221.gene:10746669"/>
<dbReference type="EnsemblBacteria" id="BAC07644">
    <property type="protein sequence ID" value="BAC07644"/>
    <property type="gene ID" value="BAC07644"/>
</dbReference>
<dbReference type="KEGG" id="tel:tlr0091"/>
<dbReference type="PATRIC" id="fig|197221.4.peg.94"/>
<dbReference type="eggNOG" id="COG0093">
    <property type="taxonomic scope" value="Bacteria"/>
</dbReference>
<dbReference type="Proteomes" id="UP000000440">
    <property type="component" value="Chromosome"/>
</dbReference>
<dbReference type="GO" id="GO:0022625">
    <property type="term" value="C:cytosolic large ribosomal subunit"/>
    <property type="evidence" value="ECO:0007669"/>
    <property type="project" value="TreeGrafter"/>
</dbReference>
<dbReference type="GO" id="GO:0070180">
    <property type="term" value="F:large ribosomal subunit rRNA binding"/>
    <property type="evidence" value="ECO:0007669"/>
    <property type="project" value="TreeGrafter"/>
</dbReference>
<dbReference type="GO" id="GO:0003735">
    <property type="term" value="F:structural constituent of ribosome"/>
    <property type="evidence" value="ECO:0007669"/>
    <property type="project" value="InterPro"/>
</dbReference>
<dbReference type="GO" id="GO:0006412">
    <property type="term" value="P:translation"/>
    <property type="evidence" value="ECO:0007669"/>
    <property type="project" value="UniProtKB-UniRule"/>
</dbReference>
<dbReference type="CDD" id="cd00337">
    <property type="entry name" value="Ribosomal_uL14"/>
    <property type="match status" value="1"/>
</dbReference>
<dbReference type="FunFam" id="2.40.150.20:FF:000001">
    <property type="entry name" value="50S ribosomal protein L14"/>
    <property type="match status" value="1"/>
</dbReference>
<dbReference type="Gene3D" id="2.40.150.20">
    <property type="entry name" value="Ribosomal protein L14"/>
    <property type="match status" value="1"/>
</dbReference>
<dbReference type="HAMAP" id="MF_01367">
    <property type="entry name" value="Ribosomal_uL14"/>
    <property type="match status" value="1"/>
</dbReference>
<dbReference type="InterPro" id="IPR000218">
    <property type="entry name" value="Ribosomal_uL14"/>
</dbReference>
<dbReference type="InterPro" id="IPR005745">
    <property type="entry name" value="Ribosomal_uL14_bac-type"/>
</dbReference>
<dbReference type="InterPro" id="IPR019972">
    <property type="entry name" value="Ribosomal_uL14_CS"/>
</dbReference>
<dbReference type="InterPro" id="IPR036853">
    <property type="entry name" value="Ribosomal_uL14_sf"/>
</dbReference>
<dbReference type="NCBIfam" id="TIGR01067">
    <property type="entry name" value="rplN_bact"/>
    <property type="match status" value="1"/>
</dbReference>
<dbReference type="PANTHER" id="PTHR11761">
    <property type="entry name" value="50S/60S RIBOSOMAL PROTEIN L14/L23"/>
    <property type="match status" value="1"/>
</dbReference>
<dbReference type="PANTHER" id="PTHR11761:SF3">
    <property type="entry name" value="LARGE RIBOSOMAL SUBUNIT PROTEIN UL14M"/>
    <property type="match status" value="1"/>
</dbReference>
<dbReference type="Pfam" id="PF00238">
    <property type="entry name" value="Ribosomal_L14"/>
    <property type="match status" value="1"/>
</dbReference>
<dbReference type="SMART" id="SM01374">
    <property type="entry name" value="Ribosomal_L14"/>
    <property type="match status" value="1"/>
</dbReference>
<dbReference type="SUPFAM" id="SSF50193">
    <property type="entry name" value="Ribosomal protein L14"/>
    <property type="match status" value="1"/>
</dbReference>
<dbReference type="PROSITE" id="PS00049">
    <property type="entry name" value="RIBOSOMAL_L14"/>
    <property type="match status" value="1"/>
</dbReference>
<keyword id="KW-1185">Reference proteome</keyword>
<keyword id="KW-0687">Ribonucleoprotein</keyword>
<keyword id="KW-0689">Ribosomal protein</keyword>
<keyword id="KW-0694">RNA-binding</keyword>
<keyword id="KW-0699">rRNA-binding</keyword>
<feature type="chain" id="PRO_0000266569" description="Large ribosomal subunit protein uL14">
    <location>
        <begin position="1"/>
        <end position="122"/>
    </location>
</feature>
<evidence type="ECO:0000255" key="1">
    <source>
        <dbReference type="HAMAP-Rule" id="MF_01367"/>
    </source>
</evidence>
<evidence type="ECO:0000305" key="2"/>
<name>RL14_THEVB</name>
<protein>
    <recommendedName>
        <fullName evidence="1">Large ribosomal subunit protein uL14</fullName>
    </recommendedName>
    <alternativeName>
        <fullName evidence="2">50S ribosomal protein L14</fullName>
    </alternativeName>
</protein>
<gene>
    <name evidence="1" type="primary">rplN</name>
    <name evidence="1" type="synonym">rpl14</name>
    <name type="ordered locus">tlr0091</name>
</gene>
<reference key="1">
    <citation type="journal article" date="2002" name="DNA Res.">
        <title>Complete genome structure of the thermophilic cyanobacterium Thermosynechococcus elongatus BP-1.</title>
        <authorList>
            <person name="Nakamura Y."/>
            <person name="Kaneko T."/>
            <person name="Sato S."/>
            <person name="Ikeuchi M."/>
            <person name="Katoh H."/>
            <person name="Sasamoto S."/>
            <person name="Watanabe A."/>
            <person name="Iriguchi M."/>
            <person name="Kawashima K."/>
            <person name="Kimura T."/>
            <person name="Kishida Y."/>
            <person name="Kiyokawa C."/>
            <person name="Kohara M."/>
            <person name="Matsumoto M."/>
            <person name="Matsuno A."/>
            <person name="Nakazaki N."/>
            <person name="Shimpo S."/>
            <person name="Sugimoto M."/>
            <person name="Takeuchi C."/>
            <person name="Yamada M."/>
            <person name="Tabata S."/>
        </authorList>
    </citation>
    <scope>NUCLEOTIDE SEQUENCE [LARGE SCALE GENOMIC DNA]</scope>
    <source>
        <strain>NIES-2133 / IAM M-273 / BP-1</strain>
    </source>
</reference>
<accession>Q8DMM2</accession>
<organism>
    <name type="scientific">Thermosynechococcus vestitus (strain NIES-2133 / IAM M-273 / BP-1)</name>
    <dbReference type="NCBI Taxonomy" id="197221"/>
    <lineage>
        <taxon>Bacteria</taxon>
        <taxon>Bacillati</taxon>
        <taxon>Cyanobacteriota</taxon>
        <taxon>Cyanophyceae</taxon>
        <taxon>Acaryochloridales</taxon>
        <taxon>Thermosynechococcaceae</taxon>
        <taxon>Thermosynechococcus</taxon>
    </lineage>
</organism>
<sequence>MIQQETYLNVADNSGAKKLLCIRVLGGSNRRYGSVGDVIIATVKDATPNMAVKKSDVVRAVIVRTRKSIRRESGMSIRFDDNAAVLINQDGNPRGTRVFGPVARELRDKNFTKIVSLAPEVL</sequence>
<comment type="function">
    <text evidence="1">Binds to 23S rRNA. Forms part of two intersubunit bridges in the 70S ribosome.</text>
</comment>
<comment type="subunit">
    <text evidence="1">Part of the 50S ribosomal subunit. Forms a cluster with proteins L3 and L19. In the 70S ribosome, L14 and L19 interact and together make contacts with the 16S rRNA in bridges B5 and B8.</text>
</comment>
<comment type="similarity">
    <text evidence="1">Belongs to the universal ribosomal protein uL14 family.</text>
</comment>